<comment type="function">
    <text evidence="4">Involved in the production of sphingolipid metabolites. Active on sphingosine, phytosphingosine (PHS, 4-hydroxysphinganine), D-erythro-dihydrosphingosine, D-erythro-sphingosine and trans-4, trans-8-sphingadienine, an LCB found exclusively in plants, but not on N-acetyl-dihydrosphingosine (C2-dihydroceramide) and D-threo-dihydrosphingosine.</text>
</comment>
<comment type="alternative products">
    <event type="alternative splicing"/>
    <isoform>
        <id>Q9LRB0-1</id>
        <name>1</name>
        <sequence type="displayed"/>
    </isoform>
    <text>A number of isoforms are produced. According to EST sequences.</text>
</comment>
<comment type="tissue specificity">
    <text evidence="4">Expressed in roots, stems, leaves and at higher levels in flowers.</text>
</comment>
<comment type="induction">
    <text evidence="4">Not induced by low-humidity stress or by abscisic acid treatment.</text>
</comment>
<comment type="sequence caution" evidence="5">
    <conflict type="erroneous gene model prediction">
        <sequence resource="EMBL-CDS" id="BAB09561"/>
    </conflict>
</comment>
<proteinExistence type="evidence at protein level"/>
<organism>
    <name type="scientific">Arabidopsis thaliana</name>
    <name type="common">Mouse-ear cress</name>
    <dbReference type="NCBI Taxonomy" id="3702"/>
    <lineage>
        <taxon>Eukaryota</taxon>
        <taxon>Viridiplantae</taxon>
        <taxon>Streptophyta</taxon>
        <taxon>Embryophyta</taxon>
        <taxon>Tracheophyta</taxon>
        <taxon>Spermatophyta</taxon>
        <taxon>Magnoliopsida</taxon>
        <taxon>eudicotyledons</taxon>
        <taxon>Gunneridae</taxon>
        <taxon>Pentapetalae</taxon>
        <taxon>rosids</taxon>
        <taxon>malvids</taxon>
        <taxon>Brassicales</taxon>
        <taxon>Brassicaceae</taxon>
        <taxon>Camelineae</taxon>
        <taxon>Arabidopsis</taxon>
    </lineage>
</organism>
<name>LCBK1_ARATH</name>
<feature type="chain" id="PRO_0000312001" description="Sphingoid long-chain bases kinase 1">
    <location>
        <begin position="1"/>
        <end position="763"/>
    </location>
</feature>
<feature type="domain" description="DAGKc" evidence="2">
    <location>
        <begin position="245"/>
        <end position="384"/>
    </location>
</feature>
<feature type="region of interest" description="Disordered" evidence="3">
    <location>
        <begin position="34"/>
        <end position="81"/>
    </location>
</feature>
<feature type="region of interest" description="Disordered" evidence="3">
    <location>
        <begin position="561"/>
        <end position="603"/>
    </location>
</feature>
<feature type="compositionally biased region" description="Basic and acidic residues" evidence="3">
    <location>
        <begin position="58"/>
        <end position="81"/>
    </location>
</feature>
<feature type="active site" description="Proton donor/acceptor" evidence="1">
    <location>
        <position position="315"/>
    </location>
</feature>
<feature type="binding site" evidence="2">
    <location>
        <begin position="255"/>
        <end position="257"/>
    </location>
    <ligand>
        <name>ATP</name>
        <dbReference type="ChEBI" id="CHEBI:30616"/>
    </ligand>
</feature>
<feature type="binding site" evidence="2">
    <location>
        <position position="287"/>
    </location>
    <ligand>
        <name>ATP</name>
        <dbReference type="ChEBI" id="CHEBI:30616"/>
    </ligand>
</feature>
<feature type="binding site" evidence="1">
    <location>
        <begin position="313"/>
        <end position="316"/>
    </location>
    <ligand>
        <name>substrate</name>
    </ligand>
</feature>
<feature type="binding site" evidence="2">
    <location>
        <position position="320"/>
    </location>
    <ligand>
        <name>ATP</name>
        <dbReference type="ChEBI" id="CHEBI:30616"/>
    </ligand>
</feature>
<feature type="binding site" evidence="2">
    <location>
        <begin position="345"/>
        <end position="347"/>
    </location>
    <ligand>
        <name>ATP</name>
        <dbReference type="ChEBI" id="CHEBI:30616"/>
    </ligand>
</feature>
<feature type="binding site" evidence="2">
    <location>
        <position position="418"/>
    </location>
    <ligand>
        <name>ATP</name>
        <dbReference type="ChEBI" id="CHEBI:30616"/>
    </ligand>
</feature>
<feature type="binding site" evidence="2">
    <location>
        <begin position="733"/>
        <end position="735"/>
    </location>
    <ligand>
        <name>ATP</name>
        <dbReference type="ChEBI" id="CHEBI:30616"/>
    </ligand>
</feature>
<feature type="sequence conflict" description="In Ref. 5; BAH20145." evidence="5" ref="5">
    <original>S</original>
    <variation>P</variation>
    <location>
        <position position="22"/>
    </location>
</feature>
<feature type="sequence conflict" description="In Ref. 5; BAH20145." evidence="5" ref="5">
    <original>S</original>
    <variation>G</variation>
    <location>
        <position position="401"/>
    </location>
</feature>
<dbReference type="EC" id="2.7.-.-"/>
<dbReference type="EMBL" id="AB046717">
    <property type="protein sequence ID" value="BAB07787.1"/>
    <property type="molecule type" value="mRNA"/>
</dbReference>
<dbReference type="EMBL" id="AB018110">
    <property type="protein sequence ID" value="BAB09561.1"/>
    <property type="status" value="ALT_SEQ"/>
    <property type="molecule type" value="Genomic_DNA"/>
</dbReference>
<dbReference type="EMBL" id="CP002688">
    <property type="protein sequence ID" value="AED93169.1"/>
    <property type="molecule type" value="Genomic_DNA"/>
</dbReference>
<dbReference type="EMBL" id="CP002688">
    <property type="protein sequence ID" value="AED93170.1"/>
    <property type="molecule type" value="Genomic_DNA"/>
</dbReference>
<dbReference type="EMBL" id="CP002688">
    <property type="protein sequence ID" value="ANM69595.1"/>
    <property type="molecule type" value="Genomic_DNA"/>
</dbReference>
<dbReference type="EMBL" id="AY139759">
    <property type="protein sequence ID" value="AAM98080.1"/>
    <property type="molecule type" value="mRNA"/>
</dbReference>
<dbReference type="EMBL" id="BT004544">
    <property type="protein sequence ID" value="AAO42790.1"/>
    <property type="molecule type" value="mRNA"/>
</dbReference>
<dbReference type="EMBL" id="AK317480">
    <property type="protein sequence ID" value="BAH20145.1"/>
    <property type="molecule type" value="mRNA"/>
</dbReference>
<dbReference type="RefSeq" id="NP_001331261.1">
    <molecule id="Q9LRB0-1"/>
    <property type="nucleotide sequence ID" value="NM_001343804.1"/>
</dbReference>
<dbReference type="RefSeq" id="NP_568432.1">
    <molecule id="Q9LRB0-1"/>
    <property type="nucleotide sequence ID" value="NM_122252.4"/>
</dbReference>
<dbReference type="RefSeq" id="NP_851065.1">
    <molecule id="Q9LRB0-1"/>
    <property type="nucleotide sequence ID" value="NM_180734.3"/>
</dbReference>
<dbReference type="SMR" id="Q9LRB0"/>
<dbReference type="BioGRID" id="17686">
    <property type="interactions" value="3"/>
</dbReference>
<dbReference type="FunCoup" id="Q9LRB0">
    <property type="interactions" value="1323"/>
</dbReference>
<dbReference type="IntAct" id="Q9LRB0">
    <property type="interactions" value="2"/>
</dbReference>
<dbReference type="STRING" id="3702.Q9LRB0"/>
<dbReference type="iPTMnet" id="Q9LRB0"/>
<dbReference type="SwissPalm" id="Q9LRB0"/>
<dbReference type="PaxDb" id="3702-AT5G23450.3"/>
<dbReference type="ProteomicsDB" id="238556">
    <molecule id="Q9LRB0-1"/>
</dbReference>
<dbReference type="EnsemblPlants" id="AT5G23450.1">
    <molecule id="Q9LRB0-1"/>
    <property type="protein sequence ID" value="AT5G23450.1"/>
    <property type="gene ID" value="AT5G23450"/>
</dbReference>
<dbReference type="EnsemblPlants" id="AT5G23450.2">
    <molecule id="Q9LRB0-1"/>
    <property type="protein sequence ID" value="AT5G23450.2"/>
    <property type="gene ID" value="AT5G23450"/>
</dbReference>
<dbReference type="EnsemblPlants" id="AT5G23450.5">
    <molecule id="Q9LRB0-1"/>
    <property type="protein sequence ID" value="AT5G23450.5"/>
    <property type="gene ID" value="AT5G23450"/>
</dbReference>
<dbReference type="GeneID" id="832411"/>
<dbReference type="Gramene" id="AT5G23450.1">
    <molecule id="Q9LRB0-1"/>
    <property type="protein sequence ID" value="AT5G23450.1"/>
    <property type="gene ID" value="AT5G23450"/>
</dbReference>
<dbReference type="Gramene" id="AT5G23450.2">
    <molecule id="Q9LRB0-1"/>
    <property type="protein sequence ID" value="AT5G23450.2"/>
    <property type="gene ID" value="AT5G23450"/>
</dbReference>
<dbReference type="Gramene" id="AT5G23450.5">
    <molecule id="Q9LRB0-1"/>
    <property type="protein sequence ID" value="AT5G23450.5"/>
    <property type="gene ID" value="AT5G23450"/>
</dbReference>
<dbReference type="KEGG" id="ath:AT5G23450"/>
<dbReference type="Araport" id="AT5G23450"/>
<dbReference type="TAIR" id="AT5G23450">
    <property type="gene designation" value="LCBK1"/>
</dbReference>
<dbReference type="eggNOG" id="KOG1116">
    <property type="taxonomic scope" value="Eukaryota"/>
</dbReference>
<dbReference type="InParanoid" id="Q9LRB0"/>
<dbReference type="OrthoDB" id="3853857at2759"/>
<dbReference type="PhylomeDB" id="Q9LRB0"/>
<dbReference type="BioCyc" id="ARA:AT5G23450-MONOMER"/>
<dbReference type="PRO" id="PR:Q9LRB0"/>
<dbReference type="Proteomes" id="UP000006548">
    <property type="component" value="Chromosome 5"/>
</dbReference>
<dbReference type="ExpressionAtlas" id="Q9LRB0">
    <property type="expression patterns" value="baseline and differential"/>
</dbReference>
<dbReference type="GO" id="GO:0016020">
    <property type="term" value="C:membrane"/>
    <property type="evidence" value="ECO:0007669"/>
    <property type="project" value="GOC"/>
</dbReference>
<dbReference type="GO" id="GO:0005524">
    <property type="term" value="F:ATP binding"/>
    <property type="evidence" value="ECO:0007669"/>
    <property type="project" value="UniProtKB-KW"/>
</dbReference>
<dbReference type="GO" id="GO:0017050">
    <property type="term" value="F:D-erythro-sphingosine kinase activity"/>
    <property type="evidence" value="ECO:0000314"/>
    <property type="project" value="UniProtKB"/>
</dbReference>
<dbReference type="GO" id="GO:0030148">
    <property type="term" value="P:sphingolipid biosynthetic process"/>
    <property type="evidence" value="ECO:0000314"/>
    <property type="project" value="UniProtKB"/>
</dbReference>
<dbReference type="FunFam" id="3.40.50.10330:FF:000044">
    <property type="entry name" value="Long-chain base (LCB) kinase 1"/>
    <property type="match status" value="1"/>
</dbReference>
<dbReference type="Gene3D" id="2.60.200.40">
    <property type="match status" value="1"/>
</dbReference>
<dbReference type="Gene3D" id="3.40.50.10330">
    <property type="entry name" value="Probable inorganic polyphosphate/atp-NAD kinase, domain 1"/>
    <property type="match status" value="1"/>
</dbReference>
<dbReference type="InterPro" id="IPR017438">
    <property type="entry name" value="ATP-NAD_kinase_N"/>
</dbReference>
<dbReference type="InterPro" id="IPR001206">
    <property type="entry name" value="Diacylglycerol_kinase_cat_dom"/>
</dbReference>
<dbReference type="InterPro" id="IPR050187">
    <property type="entry name" value="Lipid_Phosphate_FormReg"/>
</dbReference>
<dbReference type="InterPro" id="IPR016064">
    <property type="entry name" value="NAD/diacylglycerol_kinase_sf"/>
</dbReference>
<dbReference type="InterPro" id="IPR045540">
    <property type="entry name" value="YegS/DAGK_C"/>
</dbReference>
<dbReference type="PANTHER" id="PTHR12358:SF111">
    <property type="entry name" value="CERAMIDE KINASE, ISOFORM A"/>
    <property type="match status" value="1"/>
</dbReference>
<dbReference type="PANTHER" id="PTHR12358">
    <property type="entry name" value="SPHINGOSINE KINASE"/>
    <property type="match status" value="1"/>
</dbReference>
<dbReference type="Pfam" id="PF00781">
    <property type="entry name" value="DAGK_cat"/>
    <property type="match status" value="1"/>
</dbReference>
<dbReference type="Pfam" id="PF19279">
    <property type="entry name" value="YegS_C"/>
    <property type="match status" value="1"/>
</dbReference>
<dbReference type="SMART" id="SM00046">
    <property type="entry name" value="DAGKc"/>
    <property type="match status" value="1"/>
</dbReference>
<dbReference type="SUPFAM" id="SSF111331">
    <property type="entry name" value="NAD kinase/diacylglycerol kinase-like"/>
    <property type="match status" value="1"/>
</dbReference>
<dbReference type="PROSITE" id="PS50146">
    <property type="entry name" value="DAGK"/>
    <property type="match status" value="1"/>
</dbReference>
<reference key="1">
    <citation type="journal article" date="2005" name="Plant Cell Physiol.">
        <title>Phosphorylation of sphingoid long-chain bases in Arabidopsis: functional characterization and expression of the first sphingoid long-chain base Kinase gene in plants.</title>
        <authorList>
            <person name="Imai H."/>
            <person name="Nishiura H."/>
        </authorList>
    </citation>
    <scope>NUCLEOTIDE SEQUENCE [MRNA]</scope>
    <scope>FUNCTION</scope>
    <scope>TISSUE SPECIFICITY</scope>
    <scope>INDUCTION</scope>
    <source>
        <strain>cv. Columbia</strain>
    </source>
</reference>
<reference key="2">
    <citation type="journal article" date="1999" name="DNA Res.">
        <title>Structural analysis of Arabidopsis thaliana chromosome 5. IX. Sequence features of the regions of 1,011,550 bp covered by seventeen P1 and TAC clones.</title>
        <authorList>
            <person name="Kaneko T."/>
            <person name="Katoh T."/>
            <person name="Sato S."/>
            <person name="Nakamura Y."/>
            <person name="Asamizu E."/>
            <person name="Kotani H."/>
            <person name="Miyajima N."/>
            <person name="Tabata S."/>
        </authorList>
    </citation>
    <scope>NUCLEOTIDE SEQUENCE [LARGE SCALE GENOMIC DNA]</scope>
    <source>
        <strain>cv. Columbia</strain>
    </source>
</reference>
<reference key="3">
    <citation type="journal article" date="2017" name="Plant J.">
        <title>Araport11: a complete reannotation of the Arabidopsis thaliana reference genome.</title>
        <authorList>
            <person name="Cheng C.Y."/>
            <person name="Krishnakumar V."/>
            <person name="Chan A.P."/>
            <person name="Thibaud-Nissen F."/>
            <person name="Schobel S."/>
            <person name="Town C.D."/>
        </authorList>
    </citation>
    <scope>GENOME REANNOTATION</scope>
    <source>
        <strain>cv. Columbia</strain>
    </source>
</reference>
<reference key="4">
    <citation type="journal article" date="2003" name="Science">
        <title>Empirical analysis of transcriptional activity in the Arabidopsis genome.</title>
        <authorList>
            <person name="Yamada K."/>
            <person name="Lim J."/>
            <person name="Dale J.M."/>
            <person name="Chen H."/>
            <person name="Shinn P."/>
            <person name="Palm C.J."/>
            <person name="Southwick A.M."/>
            <person name="Wu H.C."/>
            <person name="Kim C.J."/>
            <person name="Nguyen M."/>
            <person name="Pham P.K."/>
            <person name="Cheuk R.F."/>
            <person name="Karlin-Newmann G."/>
            <person name="Liu S.X."/>
            <person name="Lam B."/>
            <person name="Sakano H."/>
            <person name="Wu T."/>
            <person name="Yu G."/>
            <person name="Miranda M."/>
            <person name="Quach H.L."/>
            <person name="Tripp M."/>
            <person name="Chang C.H."/>
            <person name="Lee J.M."/>
            <person name="Toriumi M.J."/>
            <person name="Chan M.M."/>
            <person name="Tang C.C."/>
            <person name="Onodera C.S."/>
            <person name="Deng J.M."/>
            <person name="Akiyama K."/>
            <person name="Ansari Y."/>
            <person name="Arakawa T."/>
            <person name="Banh J."/>
            <person name="Banno F."/>
            <person name="Bowser L."/>
            <person name="Brooks S.Y."/>
            <person name="Carninci P."/>
            <person name="Chao Q."/>
            <person name="Choy N."/>
            <person name="Enju A."/>
            <person name="Goldsmith A.D."/>
            <person name="Gurjal M."/>
            <person name="Hansen N.F."/>
            <person name="Hayashizaki Y."/>
            <person name="Johnson-Hopson C."/>
            <person name="Hsuan V.W."/>
            <person name="Iida K."/>
            <person name="Karnes M."/>
            <person name="Khan S."/>
            <person name="Koesema E."/>
            <person name="Ishida J."/>
            <person name="Jiang P.X."/>
            <person name="Jones T."/>
            <person name="Kawai J."/>
            <person name="Kamiya A."/>
            <person name="Meyers C."/>
            <person name="Nakajima M."/>
            <person name="Narusaka M."/>
            <person name="Seki M."/>
            <person name="Sakurai T."/>
            <person name="Satou M."/>
            <person name="Tamse R."/>
            <person name="Vaysberg M."/>
            <person name="Wallender E.K."/>
            <person name="Wong C."/>
            <person name="Yamamura Y."/>
            <person name="Yuan S."/>
            <person name="Shinozaki K."/>
            <person name="Davis R.W."/>
            <person name="Theologis A."/>
            <person name="Ecker J.R."/>
        </authorList>
    </citation>
    <scope>NUCLEOTIDE SEQUENCE [LARGE SCALE MRNA]</scope>
    <source>
        <strain>cv. Columbia</strain>
    </source>
</reference>
<reference key="5">
    <citation type="journal article" date="2009" name="DNA Res.">
        <title>Analysis of multiple occurrences of alternative splicing events in Arabidopsis thaliana using novel sequenced full-length cDNAs.</title>
        <authorList>
            <person name="Iida K."/>
            <person name="Fukami-Kobayashi K."/>
            <person name="Toyoda A."/>
            <person name="Sakaki Y."/>
            <person name="Kobayashi M."/>
            <person name="Seki M."/>
            <person name="Shinozaki K."/>
        </authorList>
    </citation>
    <scope>NUCLEOTIDE SEQUENCE [LARGE SCALE MRNA]</scope>
    <source>
        <strain>cv. Columbia</strain>
        <tissue>Rosette leaf</tissue>
    </source>
</reference>
<reference key="6">
    <citation type="journal article" date="2000" name="Biochem. Soc. Trans.">
        <title>Characterization of sphingolipid long-chain base kinase in Arabidopsis thaliana.</title>
        <authorList>
            <person name="Nishiura H."/>
            <person name="Tamura K."/>
            <person name="Morimoto Y."/>
            <person name="Imai H."/>
        </authorList>
    </citation>
    <scope>IDENTIFICATION</scope>
</reference>
<reference key="7">
    <citation type="journal article" date="2005" name="Plant Physiol.">
        <title>Arabidopsis sphingosine kinase and the effects of phytosphingosine-1-phosphate on stomatal aperture.</title>
        <authorList>
            <person name="Coursol S."/>
            <person name="Le Stunff H."/>
            <person name="Lynch D.V."/>
            <person name="Gilroy S."/>
            <person name="Assmann S.M."/>
            <person name="Spiegel S."/>
        </authorList>
    </citation>
    <scope>CHARACTERIZATION</scope>
</reference>
<sequence>MQKSGVNRNPSLKVAIPQAQQSLRRLGFCSQIATGGSQQSSPIVFPEKRNKKVKASSRRGEVTNDPQVKPKPDEHRIDIGGGDEKSDLLGSLVYAGKLVLDKRKSASGKDATEIQQPAATDISIKKAVDAKLTSSALVWGSDMLQLNDVVSVTYNVGLRHFTVHAYPIGKGSCGLSCFTKPKRSRKDFRFVAPTVEEAVQWVASFGDQQCFINCLPHPLVAKKQASSELFSVPIDTPPELVFRCKSAPKMLVILNPRSGHGRSIKVFHNVVEPIFKLAGIKMEVVKTTKAGHARELASTVDINLCSDGIICVGGDGIINEVLNGLLTRSNPKEGVSIPIGIVPAGSDNSLVWTVLGVRDPISAALSIVKGGLTATDVFAVEWIHTGIIHFGMTVSYYGFVSDVLELSEKYQKRFGPLRYFVAGFLKFMCLPKYSYEVEYLPAQKEDAEGKIRLEKEAVDMQDLYTDVMRRSSREGFPRASSLSSIDSIMTPSVGELDTCSSTHASTEPSEYVRGIDPKMKRLSSGRRDVTAEPEVIHPQAQSTTPNWPRTRSKSRMDKGWMGLTSVQDPPTRCSWGNTGGQDREDISSTVSDPGPIWDAGPKWDTEPSAWDVENSIELPGPPEDIETGLRKQSITPIFEDKWVSRKGHFLGIMVCNHACRTVQSSQVVAPNSEHDDGTMDMLLVHGCGRLRLLRFFILLQTGRHLSLPYVECVKVKSVKIKAGKNTHDSCGIDGELFALHGEVISTMLPEQCRLIGNAPGRHS</sequence>
<accession>Q9LRB0</accession>
<accession>B9DHC8</accession>
<accession>Q9FHL3</accession>
<gene>
    <name type="primary">LCBK1</name>
    <name type="ordered locus">At5g23450</name>
    <name type="ORF">K19M13.8</name>
</gene>
<keyword id="KW-0025">Alternative splicing</keyword>
<keyword id="KW-0067">ATP-binding</keyword>
<keyword id="KW-0418">Kinase</keyword>
<keyword id="KW-0547">Nucleotide-binding</keyword>
<keyword id="KW-1185">Reference proteome</keyword>
<keyword id="KW-0808">Transferase</keyword>
<protein>
    <recommendedName>
        <fullName>Sphingoid long-chain bases kinase 1</fullName>
        <shortName>AtLCBK1</shortName>
        <shortName>LCB kinase 1</shortName>
        <ecNumber>2.7.-.-</ecNumber>
    </recommendedName>
    <alternativeName>
        <fullName>Sphingosine kinase 1</fullName>
    </alternativeName>
</protein>
<evidence type="ECO:0000250" key="1"/>
<evidence type="ECO:0000255" key="2">
    <source>
        <dbReference type="PROSITE-ProRule" id="PRU00783"/>
    </source>
</evidence>
<evidence type="ECO:0000256" key="3">
    <source>
        <dbReference type="SAM" id="MobiDB-lite"/>
    </source>
</evidence>
<evidence type="ECO:0000269" key="4">
    <source>
    </source>
</evidence>
<evidence type="ECO:0000305" key="5"/>